<feature type="chain" id="PRO_0000212167" description="2,3-bisphosphoglycerate-independent phosphoglycerate mutase">
    <location>
        <begin position="1"/>
        <end position="507"/>
    </location>
</feature>
<feature type="active site" description="Phosphoserine intermediate" evidence="1">
    <location>
        <position position="61"/>
    </location>
</feature>
<feature type="binding site" evidence="1">
    <location>
        <position position="11"/>
    </location>
    <ligand>
        <name>Mn(2+)</name>
        <dbReference type="ChEBI" id="CHEBI:29035"/>
        <label>2</label>
    </ligand>
</feature>
<feature type="binding site" evidence="1">
    <location>
        <position position="61"/>
    </location>
    <ligand>
        <name>Mn(2+)</name>
        <dbReference type="ChEBI" id="CHEBI:29035"/>
        <label>2</label>
    </ligand>
</feature>
<feature type="binding site" evidence="1">
    <location>
        <position position="122"/>
    </location>
    <ligand>
        <name>substrate</name>
    </ligand>
</feature>
<feature type="binding site" evidence="1">
    <location>
        <begin position="150"/>
        <end position="151"/>
    </location>
    <ligand>
        <name>substrate</name>
    </ligand>
</feature>
<feature type="binding site" evidence="1">
    <location>
        <position position="182"/>
    </location>
    <ligand>
        <name>substrate</name>
    </ligand>
</feature>
<feature type="binding site" evidence="1">
    <location>
        <position position="188"/>
    </location>
    <ligand>
        <name>substrate</name>
    </ligand>
</feature>
<feature type="binding site" evidence="1">
    <location>
        <begin position="257"/>
        <end position="260"/>
    </location>
    <ligand>
        <name>substrate</name>
    </ligand>
</feature>
<feature type="binding site" evidence="1">
    <location>
        <position position="332"/>
    </location>
    <ligand>
        <name>substrate</name>
    </ligand>
</feature>
<feature type="binding site" evidence="1">
    <location>
        <position position="397"/>
    </location>
    <ligand>
        <name>Mn(2+)</name>
        <dbReference type="ChEBI" id="CHEBI:29035"/>
        <label>1</label>
    </ligand>
</feature>
<feature type="binding site" evidence="1">
    <location>
        <position position="401"/>
    </location>
    <ligand>
        <name>Mn(2+)</name>
        <dbReference type="ChEBI" id="CHEBI:29035"/>
        <label>1</label>
    </ligand>
</feature>
<feature type="binding site" evidence="1">
    <location>
        <position position="438"/>
    </location>
    <ligand>
        <name>Mn(2+)</name>
        <dbReference type="ChEBI" id="CHEBI:29035"/>
        <label>2</label>
    </ligand>
</feature>
<feature type="binding site" evidence="1">
    <location>
        <position position="439"/>
    </location>
    <ligand>
        <name>Mn(2+)</name>
        <dbReference type="ChEBI" id="CHEBI:29035"/>
        <label>2</label>
    </ligand>
</feature>
<feature type="binding site" evidence="1">
    <location>
        <position position="456"/>
    </location>
    <ligand>
        <name>Mn(2+)</name>
        <dbReference type="ChEBI" id="CHEBI:29035"/>
        <label>1</label>
    </ligand>
</feature>
<proteinExistence type="inferred from homology"/>
<accession>P47669</accession>
<sequence length="507" mass="56927">MHKKVLLAILDGYGISNAIYGNAVQNANTPMLDELINSYPCVLLDASGEAVGLPMGQIGNSEVGHLNIGAGRVVYTGLSLINQHIKDRSFFANKAFLKTIEHVEKNHSKIHLIGLFSNGGVHSHNEHLLALIELFSKHAKVVLHLFGDGRDVAPCSLKQDLEKLMIFLKNYPNVVIGTIGGRYYGMDRDQRWDREMIAYKALLGVSKNKFNDPIGYIETQYQNQITDEFIYPAINANLNSDQFALNNNDGVIFFNFRPDRARQMSHLIFNSNYYNYQPELKRKENLFFVTMMNYEGIVPSEFAFPPQTIKNSLGEVIANNNLKQLRIAETEKYAHVTFFFDGGFEVNLSNETKTLIPSLKVATYDLAPEMSCKAITDALLEKLNNFDFTVLNFANPDMVGHTGNYQACIKALEALDVQIKRIVDFCKANQITMFLTADHGNAEVMIDNNNNPVTKHTINPVPFVCTDKNVNFNQTGILANIAPTILEYLNLSKPKEMTAKSLLKNNN</sequence>
<evidence type="ECO:0000255" key="1">
    <source>
        <dbReference type="HAMAP-Rule" id="MF_01038"/>
    </source>
</evidence>
<evidence type="ECO:0000269" key="2">
    <source>
    </source>
</evidence>
<gene>
    <name evidence="1" type="primary">gpmI</name>
    <name type="synonym">pgm</name>
    <name type="ordered locus">MG430</name>
</gene>
<comment type="function">
    <text evidence="1">Catalyzes the interconversion of 2-phosphoglycerate and 3-phosphoglycerate.</text>
</comment>
<comment type="catalytic activity">
    <reaction evidence="1">
        <text>(2R)-2-phosphoglycerate = (2R)-3-phosphoglycerate</text>
        <dbReference type="Rhea" id="RHEA:15901"/>
        <dbReference type="ChEBI" id="CHEBI:58272"/>
        <dbReference type="ChEBI" id="CHEBI:58289"/>
        <dbReference type="EC" id="5.4.2.12"/>
    </reaction>
</comment>
<comment type="cofactor">
    <cofactor evidence="1">
        <name>Mn(2+)</name>
        <dbReference type="ChEBI" id="CHEBI:29035"/>
    </cofactor>
    <text evidence="1">Binds 2 manganese ions per subunit.</text>
</comment>
<comment type="pathway">
    <text evidence="1">Carbohydrate degradation; glycolysis; pyruvate from D-glyceraldehyde 3-phosphate: step 3/5.</text>
</comment>
<comment type="subunit">
    <text evidence="1">Monomer.</text>
</comment>
<comment type="disruption phenotype">
    <text evidence="2">Probably essential, it was not disrupted in a global transposon mutagenesis study.</text>
</comment>
<comment type="similarity">
    <text evidence="1">Belongs to the BPG-independent phosphoglycerate mutase family.</text>
</comment>
<organism>
    <name type="scientific">Mycoplasma genitalium (strain ATCC 33530 / DSM 19775 / NCTC 10195 / G37)</name>
    <name type="common">Mycoplasmoides genitalium</name>
    <dbReference type="NCBI Taxonomy" id="243273"/>
    <lineage>
        <taxon>Bacteria</taxon>
        <taxon>Bacillati</taxon>
        <taxon>Mycoplasmatota</taxon>
        <taxon>Mycoplasmoidales</taxon>
        <taxon>Mycoplasmoidaceae</taxon>
        <taxon>Mycoplasmoides</taxon>
    </lineage>
</organism>
<keyword id="KW-0324">Glycolysis</keyword>
<keyword id="KW-0413">Isomerase</keyword>
<keyword id="KW-0464">Manganese</keyword>
<keyword id="KW-0479">Metal-binding</keyword>
<keyword id="KW-1185">Reference proteome</keyword>
<protein>
    <recommendedName>
        <fullName evidence="1">2,3-bisphosphoglycerate-independent phosphoglycerate mutase</fullName>
        <shortName evidence="1">BPG-independent PGAM</shortName>
        <shortName evidence="1">Phosphoglyceromutase</shortName>
        <shortName evidence="1">iPGM</shortName>
        <ecNumber evidence="1">5.4.2.12</ecNumber>
    </recommendedName>
</protein>
<reference key="1">
    <citation type="journal article" date="1995" name="Science">
        <title>The minimal gene complement of Mycoplasma genitalium.</title>
        <authorList>
            <person name="Fraser C.M."/>
            <person name="Gocayne J.D."/>
            <person name="White O."/>
            <person name="Adams M.D."/>
            <person name="Clayton R.A."/>
            <person name="Fleischmann R.D."/>
            <person name="Bult C.J."/>
            <person name="Kerlavage A.R."/>
            <person name="Sutton G.G."/>
            <person name="Kelley J.M."/>
            <person name="Fritchman J.L."/>
            <person name="Weidman J.F."/>
            <person name="Small K.V."/>
            <person name="Sandusky M."/>
            <person name="Fuhrmann J.L."/>
            <person name="Nguyen D.T."/>
            <person name="Utterback T.R."/>
            <person name="Saudek D.M."/>
            <person name="Phillips C.A."/>
            <person name="Merrick J.M."/>
            <person name="Tomb J.-F."/>
            <person name="Dougherty B.A."/>
            <person name="Bott K.F."/>
            <person name="Hu P.-C."/>
            <person name="Lucier T.S."/>
            <person name="Peterson S.N."/>
            <person name="Smith H.O."/>
            <person name="Hutchison C.A. III"/>
            <person name="Venter J.C."/>
        </authorList>
    </citation>
    <scope>NUCLEOTIDE SEQUENCE [LARGE SCALE GENOMIC DNA]</scope>
    <source>
        <strain>ATCC 33530 / DSM 19775 / NCTC 10195 / G37</strain>
    </source>
</reference>
<reference key="2">
    <citation type="journal article" date="2006" name="Proc. Natl. Acad. Sci. U.S.A.">
        <title>Essential genes of a minimal bacterium.</title>
        <authorList>
            <person name="Glass J.I."/>
            <person name="Assad-Garcia N."/>
            <person name="Alperovich N."/>
            <person name="Yooseph S."/>
            <person name="Lewis M.R."/>
            <person name="Maruf M."/>
            <person name="Hutchison C.A. III"/>
            <person name="Smith H.O."/>
            <person name="Venter J.C."/>
        </authorList>
    </citation>
    <scope>SEQUENCE REVISION TO 253</scope>
    <scope>DISRUPTION PHENOTYPE</scope>
    <source>
        <strain>ATCC 33530 / DSM 19775 / NCTC 10195 / G37</strain>
    </source>
</reference>
<dbReference type="EC" id="5.4.2.12" evidence="1"/>
<dbReference type="EMBL" id="L43967">
    <property type="protein sequence ID" value="AAC72451.2"/>
    <property type="molecule type" value="Genomic_DNA"/>
</dbReference>
<dbReference type="PIR" id="E64247">
    <property type="entry name" value="E64247"/>
</dbReference>
<dbReference type="RefSeq" id="WP_009885603.1">
    <property type="nucleotide sequence ID" value="NC_000908.2"/>
</dbReference>
<dbReference type="SMR" id="P47669"/>
<dbReference type="FunCoup" id="P47669">
    <property type="interactions" value="115"/>
</dbReference>
<dbReference type="STRING" id="243273.MG_430"/>
<dbReference type="GeneID" id="88282611"/>
<dbReference type="KEGG" id="mge:MG_430"/>
<dbReference type="eggNOG" id="COG0696">
    <property type="taxonomic scope" value="Bacteria"/>
</dbReference>
<dbReference type="HOGENOM" id="CLU_026099_2_0_14"/>
<dbReference type="InParanoid" id="P47669"/>
<dbReference type="OrthoDB" id="9800863at2"/>
<dbReference type="UniPathway" id="UPA00109">
    <property type="reaction ID" value="UER00186"/>
</dbReference>
<dbReference type="Proteomes" id="UP000000807">
    <property type="component" value="Chromosome"/>
</dbReference>
<dbReference type="GO" id="GO:0005829">
    <property type="term" value="C:cytosol"/>
    <property type="evidence" value="ECO:0000318"/>
    <property type="project" value="GO_Central"/>
</dbReference>
<dbReference type="GO" id="GO:0030145">
    <property type="term" value="F:manganese ion binding"/>
    <property type="evidence" value="ECO:0000318"/>
    <property type="project" value="GO_Central"/>
</dbReference>
<dbReference type="GO" id="GO:0004619">
    <property type="term" value="F:phosphoglycerate mutase activity"/>
    <property type="evidence" value="ECO:0000318"/>
    <property type="project" value="GO_Central"/>
</dbReference>
<dbReference type="GO" id="GO:0005975">
    <property type="term" value="P:carbohydrate metabolic process"/>
    <property type="evidence" value="ECO:0000318"/>
    <property type="project" value="GO_Central"/>
</dbReference>
<dbReference type="GO" id="GO:0006007">
    <property type="term" value="P:glucose catabolic process"/>
    <property type="evidence" value="ECO:0007669"/>
    <property type="project" value="InterPro"/>
</dbReference>
<dbReference type="GO" id="GO:0006096">
    <property type="term" value="P:glycolytic process"/>
    <property type="evidence" value="ECO:0007669"/>
    <property type="project" value="UniProtKB-UniRule"/>
</dbReference>
<dbReference type="CDD" id="cd16010">
    <property type="entry name" value="iPGM"/>
    <property type="match status" value="1"/>
</dbReference>
<dbReference type="FunFam" id="3.40.1450.10:FF:000002">
    <property type="entry name" value="2,3-bisphosphoglycerate-independent phosphoglycerate mutase"/>
    <property type="match status" value="1"/>
</dbReference>
<dbReference type="Gene3D" id="3.40.720.10">
    <property type="entry name" value="Alkaline Phosphatase, subunit A"/>
    <property type="match status" value="1"/>
</dbReference>
<dbReference type="Gene3D" id="3.40.1450.10">
    <property type="entry name" value="BPG-independent phosphoglycerate mutase, domain B"/>
    <property type="match status" value="1"/>
</dbReference>
<dbReference type="HAMAP" id="MF_01038">
    <property type="entry name" value="GpmI"/>
    <property type="match status" value="1"/>
</dbReference>
<dbReference type="InterPro" id="IPR017850">
    <property type="entry name" value="Alkaline_phosphatase_core_sf"/>
</dbReference>
<dbReference type="InterPro" id="IPR011258">
    <property type="entry name" value="BPG-indep_PGM_N"/>
</dbReference>
<dbReference type="InterPro" id="IPR006124">
    <property type="entry name" value="Metalloenzyme"/>
</dbReference>
<dbReference type="InterPro" id="IPR036646">
    <property type="entry name" value="PGAM_B_sf"/>
</dbReference>
<dbReference type="InterPro" id="IPR005995">
    <property type="entry name" value="Pgm_bpd_ind"/>
</dbReference>
<dbReference type="NCBIfam" id="TIGR01307">
    <property type="entry name" value="pgm_bpd_ind"/>
    <property type="match status" value="1"/>
</dbReference>
<dbReference type="PANTHER" id="PTHR31637">
    <property type="entry name" value="2,3-BISPHOSPHOGLYCERATE-INDEPENDENT PHOSPHOGLYCERATE MUTASE"/>
    <property type="match status" value="1"/>
</dbReference>
<dbReference type="PANTHER" id="PTHR31637:SF0">
    <property type="entry name" value="2,3-BISPHOSPHOGLYCERATE-INDEPENDENT PHOSPHOGLYCERATE MUTASE"/>
    <property type="match status" value="1"/>
</dbReference>
<dbReference type="Pfam" id="PF06415">
    <property type="entry name" value="iPGM_N"/>
    <property type="match status" value="1"/>
</dbReference>
<dbReference type="Pfam" id="PF01676">
    <property type="entry name" value="Metalloenzyme"/>
    <property type="match status" value="1"/>
</dbReference>
<dbReference type="PIRSF" id="PIRSF001492">
    <property type="entry name" value="IPGAM"/>
    <property type="match status" value="1"/>
</dbReference>
<dbReference type="SUPFAM" id="SSF64158">
    <property type="entry name" value="2,3-Bisphosphoglycerate-independent phosphoglycerate mutase, substrate-binding domain"/>
    <property type="match status" value="1"/>
</dbReference>
<dbReference type="SUPFAM" id="SSF53649">
    <property type="entry name" value="Alkaline phosphatase-like"/>
    <property type="match status" value="1"/>
</dbReference>
<name>GPMI_MYCGE</name>